<feature type="chain" id="PRO_0000299969" description="Ribulose bisphosphate carboxylase large chain">
    <location>
        <begin position="1"/>
        <end position="471"/>
    </location>
</feature>
<feature type="active site" description="Proton acceptor" evidence="1">
    <location>
        <position position="167"/>
    </location>
</feature>
<feature type="active site" description="Proton acceptor" evidence="1">
    <location>
        <position position="286"/>
    </location>
</feature>
<feature type="binding site" description="in homodimeric partner" evidence="1">
    <location>
        <position position="115"/>
    </location>
    <ligand>
        <name>substrate</name>
    </ligand>
</feature>
<feature type="binding site" evidence="1">
    <location>
        <position position="165"/>
    </location>
    <ligand>
        <name>substrate</name>
    </ligand>
</feature>
<feature type="binding site" evidence="1">
    <location>
        <position position="169"/>
    </location>
    <ligand>
        <name>substrate</name>
    </ligand>
</feature>
<feature type="binding site" description="via carbamate group" evidence="1">
    <location>
        <position position="193"/>
    </location>
    <ligand>
        <name>Mg(2+)</name>
        <dbReference type="ChEBI" id="CHEBI:18420"/>
    </ligand>
</feature>
<feature type="binding site" evidence="1">
    <location>
        <position position="195"/>
    </location>
    <ligand>
        <name>Mg(2+)</name>
        <dbReference type="ChEBI" id="CHEBI:18420"/>
    </ligand>
</feature>
<feature type="binding site" evidence="1">
    <location>
        <position position="196"/>
    </location>
    <ligand>
        <name>Mg(2+)</name>
        <dbReference type="ChEBI" id="CHEBI:18420"/>
    </ligand>
</feature>
<feature type="binding site" evidence="1">
    <location>
        <position position="287"/>
    </location>
    <ligand>
        <name>substrate</name>
    </ligand>
</feature>
<feature type="binding site" evidence="1">
    <location>
        <position position="319"/>
    </location>
    <ligand>
        <name>substrate</name>
    </ligand>
</feature>
<feature type="binding site" evidence="1">
    <location>
        <position position="371"/>
    </location>
    <ligand>
        <name>substrate</name>
    </ligand>
</feature>
<feature type="site" description="Transition state stabilizer" evidence="1">
    <location>
        <position position="326"/>
    </location>
</feature>
<feature type="modified residue" description="N6-carboxylysine" evidence="1">
    <location>
        <position position="193"/>
    </location>
</feature>
<gene>
    <name evidence="1" type="primary">cbbL</name>
    <name evidence="1" type="synonym">rbcL</name>
    <name type="ordered locus">P9301_05761</name>
</gene>
<comment type="function">
    <text evidence="1">RuBisCO catalyzes two reactions: the carboxylation of D-ribulose 1,5-bisphosphate, the primary event in carbon dioxide fixation, as well as the oxidative fragmentation of the pentose substrate in the photorespiration process. Both reactions occur simultaneously and in competition at the same active site.</text>
</comment>
<comment type="catalytic activity">
    <reaction evidence="1">
        <text>2 (2R)-3-phosphoglycerate + 2 H(+) = D-ribulose 1,5-bisphosphate + CO2 + H2O</text>
        <dbReference type="Rhea" id="RHEA:23124"/>
        <dbReference type="ChEBI" id="CHEBI:15377"/>
        <dbReference type="ChEBI" id="CHEBI:15378"/>
        <dbReference type="ChEBI" id="CHEBI:16526"/>
        <dbReference type="ChEBI" id="CHEBI:57870"/>
        <dbReference type="ChEBI" id="CHEBI:58272"/>
        <dbReference type="EC" id="4.1.1.39"/>
    </reaction>
</comment>
<comment type="catalytic activity">
    <reaction evidence="1">
        <text>D-ribulose 1,5-bisphosphate + O2 = 2-phosphoglycolate + (2R)-3-phosphoglycerate + 2 H(+)</text>
        <dbReference type="Rhea" id="RHEA:36631"/>
        <dbReference type="ChEBI" id="CHEBI:15378"/>
        <dbReference type="ChEBI" id="CHEBI:15379"/>
        <dbReference type="ChEBI" id="CHEBI:57870"/>
        <dbReference type="ChEBI" id="CHEBI:58033"/>
        <dbReference type="ChEBI" id="CHEBI:58272"/>
    </reaction>
</comment>
<comment type="cofactor">
    <cofactor evidence="1">
        <name>Mg(2+)</name>
        <dbReference type="ChEBI" id="CHEBI:18420"/>
    </cofactor>
    <text evidence="1">Binds 1 Mg(2+) ion per subunit.</text>
</comment>
<comment type="subunit">
    <text evidence="1">Heterohexadecamer of 8 large chains and 8 small chains.</text>
</comment>
<comment type="subcellular location">
    <subcellularLocation>
        <location evidence="1">Carboxysome</location>
    </subcellularLocation>
</comment>
<comment type="miscellaneous">
    <text evidence="1">The basic functional RuBisCO is composed of a large chain homodimer in a 'head-to-tail' conformation. In form I RuBisCO this homodimer is arranged in a barrel-like tetramer with the small subunits forming a tetrameric 'cap' on each end of the 'barrel'.</text>
</comment>
<comment type="similarity">
    <text evidence="1">Belongs to the RuBisCO large chain family. Type I subfamily.</text>
</comment>
<protein>
    <recommendedName>
        <fullName evidence="1">Ribulose bisphosphate carboxylase large chain</fullName>
        <shortName evidence="1">RuBisCO large subunit</shortName>
        <ecNumber evidence="1">4.1.1.39</ecNumber>
    </recommendedName>
</protein>
<organism>
    <name type="scientific">Prochlorococcus marinus (strain MIT 9301)</name>
    <dbReference type="NCBI Taxonomy" id="167546"/>
    <lineage>
        <taxon>Bacteria</taxon>
        <taxon>Bacillati</taxon>
        <taxon>Cyanobacteriota</taxon>
        <taxon>Cyanophyceae</taxon>
        <taxon>Synechococcales</taxon>
        <taxon>Prochlorococcaceae</taxon>
        <taxon>Prochlorococcus</taxon>
    </lineage>
</organism>
<accession>A3PBS4</accession>
<evidence type="ECO:0000255" key="1">
    <source>
        <dbReference type="HAMAP-Rule" id="MF_01338"/>
    </source>
</evidence>
<keyword id="KW-1283">Bacterial microcompartment</keyword>
<keyword id="KW-0113">Calvin cycle</keyword>
<keyword id="KW-0120">Carbon dioxide fixation</keyword>
<keyword id="KW-1282">Carboxysome</keyword>
<keyword id="KW-0456">Lyase</keyword>
<keyword id="KW-0460">Magnesium</keyword>
<keyword id="KW-0479">Metal-binding</keyword>
<keyword id="KW-0503">Monooxygenase</keyword>
<keyword id="KW-0560">Oxidoreductase</keyword>
<keyword id="KW-0601">Photorespiration</keyword>
<keyword id="KW-0602">Photosynthesis</keyword>
<keyword id="KW-1185">Reference proteome</keyword>
<proteinExistence type="inferred from homology"/>
<name>RBL_PROM0</name>
<reference key="1">
    <citation type="journal article" date="2007" name="PLoS Genet.">
        <title>Patterns and implications of gene gain and loss in the evolution of Prochlorococcus.</title>
        <authorList>
            <person name="Kettler G.C."/>
            <person name="Martiny A.C."/>
            <person name="Huang K."/>
            <person name="Zucker J."/>
            <person name="Coleman M.L."/>
            <person name="Rodrigue S."/>
            <person name="Chen F."/>
            <person name="Lapidus A."/>
            <person name="Ferriera S."/>
            <person name="Johnson J."/>
            <person name="Steglich C."/>
            <person name="Church G.M."/>
            <person name="Richardson P."/>
            <person name="Chisholm S.W."/>
        </authorList>
    </citation>
    <scope>NUCLEOTIDE SEQUENCE [LARGE SCALE GENOMIC DNA]</scope>
    <source>
        <strain>MIT 9301</strain>
    </source>
</reference>
<sequence>MSKKYDAGVKEYRDTYWTPEYVPLDTDLLACFKCTGQEGVPREEVAAAVAAESSTGTWSTVWSELLTDLEFYKGRCYRIEDVPGDPEAFYAFIAYPLDLFEEGSITNVLTSLVGNVFGFKALRHLRLEDIRFPIAFIKTCGGPPNGIVVERDRLNKYGRPLLGCTIKPKLGLSGKNYGRVVYECLRGGLDLTKDDENINSQPFQRWRERFEFVAEAVKLAQRETGEVKGHYLNCTANTPEELYERAEFAKELDMPIIMHDYITGGFTANTGLANWCRKNGMLLHIHRAMHAVIDRHPKHGIHFRVLAKCLRLSGGDQLHTGTVVGKLEGDRQTTLGYIDNLRESFVPEDRSRGNFFDQDWGSMPGVFAVASGGIHVWHMPALLAIFGDDSCLQFGGGTHGHPWGSAAGAAANRVALEACVKARNAGREIEKESRDILMEAAKHSPELAIALETWKEIKFEFDTVDKLDVQG</sequence>
<dbReference type="EC" id="4.1.1.39" evidence="1"/>
<dbReference type="EMBL" id="CP000576">
    <property type="protein sequence ID" value="ABO17199.1"/>
    <property type="molecule type" value="Genomic_DNA"/>
</dbReference>
<dbReference type="RefSeq" id="WP_011862567.1">
    <property type="nucleotide sequence ID" value="NC_009091.1"/>
</dbReference>
<dbReference type="SMR" id="A3PBS4"/>
<dbReference type="STRING" id="167546.P9301_05761"/>
<dbReference type="KEGG" id="pmg:P9301_05761"/>
<dbReference type="eggNOG" id="COG1850">
    <property type="taxonomic scope" value="Bacteria"/>
</dbReference>
<dbReference type="HOGENOM" id="CLU_031450_2_0_3"/>
<dbReference type="OrthoDB" id="9770811at2"/>
<dbReference type="Proteomes" id="UP000001430">
    <property type="component" value="Chromosome"/>
</dbReference>
<dbReference type="GO" id="GO:0031470">
    <property type="term" value="C:carboxysome"/>
    <property type="evidence" value="ECO:0007669"/>
    <property type="project" value="UniProtKB-SubCell"/>
</dbReference>
<dbReference type="GO" id="GO:0000287">
    <property type="term" value="F:magnesium ion binding"/>
    <property type="evidence" value="ECO:0007669"/>
    <property type="project" value="UniProtKB-UniRule"/>
</dbReference>
<dbReference type="GO" id="GO:0004497">
    <property type="term" value="F:monooxygenase activity"/>
    <property type="evidence" value="ECO:0007669"/>
    <property type="project" value="UniProtKB-KW"/>
</dbReference>
<dbReference type="GO" id="GO:0016984">
    <property type="term" value="F:ribulose-bisphosphate carboxylase activity"/>
    <property type="evidence" value="ECO:0007669"/>
    <property type="project" value="UniProtKB-UniRule"/>
</dbReference>
<dbReference type="GO" id="GO:0009853">
    <property type="term" value="P:photorespiration"/>
    <property type="evidence" value="ECO:0007669"/>
    <property type="project" value="UniProtKB-KW"/>
</dbReference>
<dbReference type="GO" id="GO:0019253">
    <property type="term" value="P:reductive pentose-phosphate cycle"/>
    <property type="evidence" value="ECO:0007669"/>
    <property type="project" value="UniProtKB-UniRule"/>
</dbReference>
<dbReference type="Gene3D" id="3.20.20.110">
    <property type="entry name" value="Ribulose bisphosphate carboxylase, large subunit, C-terminal domain"/>
    <property type="match status" value="1"/>
</dbReference>
<dbReference type="Gene3D" id="3.30.70.150">
    <property type="entry name" value="RuBisCO large subunit, N-terminal domain"/>
    <property type="match status" value="1"/>
</dbReference>
<dbReference type="HAMAP" id="MF_01338">
    <property type="entry name" value="RuBisCO_L_type1"/>
    <property type="match status" value="1"/>
</dbReference>
<dbReference type="InterPro" id="IPR033966">
    <property type="entry name" value="RuBisCO"/>
</dbReference>
<dbReference type="InterPro" id="IPR000685">
    <property type="entry name" value="RuBisCO_lsu_C"/>
</dbReference>
<dbReference type="InterPro" id="IPR036376">
    <property type="entry name" value="RuBisCO_lsu_C_sf"/>
</dbReference>
<dbReference type="InterPro" id="IPR017443">
    <property type="entry name" value="RuBisCO_lsu_fd_N"/>
</dbReference>
<dbReference type="InterPro" id="IPR036422">
    <property type="entry name" value="RuBisCO_lsu_N_sf"/>
</dbReference>
<dbReference type="InterPro" id="IPR020888">
    <property type="entry name" value="RuBisCO_lsuI"/>
</dbReference>
<dbReference type="NCBIfam" id="NF003252">
    <property type="entry name" value="PRK04208.1"/>
    <property type="match status" value="1"/>
</dbReference>
<dbReference type="PANTHER" id="PTHR42704">
    <property type="entry name" value="RIBULOSE BISPHOSPHATE CARBOXYLASE"/>
    <property type="match status" value="1"/>
</dbReference>
<dbReference type="PANTHER" id="PTHR42704:SF17">
    <property type="entry name" value="RIBULOSE BISPHOSPHATE CARBOXYLASE LARGE CHAIN"/>
    <property type="match status" value="1"/>
</dbReference>
<dbReference type="Pfam" id="PF00016">
    <property type="entry name" value="RuBisCO_large"/>
    <property type="match status" value="1"/>
</dbReference>
<dbReference type="Pfam" id="PF02788">
    <property type="entry name" value="RuBisCO_large_N"/>
    <property type="match status" value="1"/>
</dbReference>
<dbReference type="SFLD" id="SFLDG01052">
    <property type="entry name" value="RuBisCO"/>
    <property type="match status" value="1"/>
</dbReference>
<dbReference type="SFLD" id="SFLDS00014">
    <property type="entry name" value="RuBisCO"/>
    <property type="match status" value="1"/>
</dbReference>
<dbReference type="SFLD" id="SFLDG00301">
    <property type="entry name" value="RuBisCO-like_proteins"/>
    <property type="match status" value="1"/>
</dbReference>
<dbReference type="SUPFAM" id="SSF51649">
    <property type="entry name" value="RuBisCo, C-terminal domain"/>
    <property type="match status" value="1"/>
</dbReference>
<dbReference type="SUPFAM" id="SSF54966">
    <property type="entry name" value="RuBisCO, large subunit, small (N-terminal) domain"/>
    <property type="match status" value="1"/>
</dbReference>